<feature type="chain" id="PRO_0000417606" description="CRISPR-associated endonuclease Cas3-HD">
    <location>
        <begin position="1"/>
        <end position="237"/>
    </location>
</feature>
<feature type="domain" description="HD Cas3-type" evidence="2">
    <location>
        <begin position="4"/>
        <end position="215"/>
    </location>
</feature>
<feature type="binding site" evidence="1">
    <location>
        <position position="61"/>
    </location>
    <ligand>
        <name>Mg(2+)</name>
        <dbReference type="ChEBI" id="CHEBI:18420"/>
        <note>catalytic</note>
    </ligand>
</feature>
<feature type="binding site" evidence="1">
    <location>
        <position position="84"/>
    </location>
    <ligand>
        <name>Mg(2+)</name>
        <dbReference type="ChEBI" id="CHEBI:18420"/>
        <note>catalytic</note>
    </ligand>
</feature>
<feature type="binding site" evidence="1">
    <location>
        <position position="116"/>
    </location>
    <ligand>
        <name>Mg(2+)</name>
        <dbReference type="ChEBI" id="CHEBI:18420"/>
        <note>catalytic</note>
    </ligand>
</feature>
<feature type="binding site" evidence="1">
    <location>
        <position position="117"/>
    </location>
    <ligand>
        <name>Mg(2+)</name>
        <dbReference type="ChEBI" id="CHEBI:18420"/>
        <note>catalytic</note>
    </ligand>
</feature>
<gene>
    <name type="primary">cas3</name>
    <name type="synonym">cas3''</name>
    <name type="ordered locus">PF0639</name>
</gene>
<name>CS3HD_PYRFU</name>
<organism>
    <name type="scientific">Pyrococcus furiosus (strain ATCC 43587 / DSM 3638 / JCM 8422 / Vc1)</name>
    <dbReference type="NCBI Taxonomy" id="186497"/>
    <lineage>
        <taxon>Archaea</taxon>
        <taxon>Methanobacteriati</taxon>
        <taxon>Methanobacteriota</taxon>
        <taxon>Thermococci</taxon>
        <taxon>Thermococcales</taxon>
        <taxon>Thermococcaceae</taxon>
        <taxon>Pyrococcus</taxon>
    </lineage>
</organism>
<accession>Q8U336</accession>
<protein>
    <recommendedName>
        <fullName>CRISPR-associated endonuclease Cas3-HD</fullName>
        <ecNumber>3.1.-.-</ecNumber>
    </recommendedName>
    <alternativeName>
        <fullName>CRISPR-associated ss-nucleic acid exo- and endonuclease Cas3-HD</fullName>
    </alternativeName>
</protein>
<reference key="1">
    <citation type="journal article" date="1999" name="Genetics">
        <title>Divergence of the hyperthermophilic archaea Pyrococcus furiosus and P. horikoshii inferred from complete genomic sequences.</title>
        <authorList>
            <person name="Maeder D.L."/>
            <person name="Weiss R.B."/>
            <person name="Dunn D.M."/>
            <person name="Cherry J.L."/>
            <person name="Gonzalez J.M."/>
            <person name="DiRuggiero J."/>
            <person name="Robb F.T."/>
        </authorList>
    </citation>
    <scope>NUCLEOTIDE SEQUENCE [LARGE SCALE GENOMIC DNA]</scope>
    <source>
        <strain>ATCC 43587 / DSM 3638 / JCM 8422 / Vc1</strain>
    </source>
</reference>
<reference key="2">
    <citation type="journal article" date="2011" name="EMBO J.">
        <title>Structure and activity of the Cas3 HD nuclease MJ0384, an effector enzyme of the CRISPR interference.</title>
        <authorList>
            <person name="Beloglazova N."/>
            <person name="Petit P."/>
            <person name="Flick R."/>
            <person name="Brown G."/>
            <person name="Savchenko A."/>
            <person name="Yakunin A.F."/>
        </authorList>
    </citation>
    <scope>FUNCTION AS A NUCLEASE</scope>
    <scope>COFACTOR</scope>
    <scope>BIOPHYSICOCHEMICAL PROPERTIES</scope>
    <scope>ACTIVITY REGULATION</scope>
    <scope>SUBUNIT</scope>
    <source>
        <strain>ATCC 43587 / DSM 3638 / JCM 8422 / Vc1</strain>
    </source>
</reference>
<evidence type="ECO:0000250" key="1"/>
<evidence type="ECO:0000255" key="2">
    <source>
        <dbReference type="PROSITE-ProRule" id="PRU00974"/>
    </source>
</evidence>
<evidence type="ECO:0000269" key="3">
    <source>
    </source>
</evidence>
<evidence type="ECO:0000305" key="4"/>
<sequence length="237" mass="27077">MSCKAFQGQTLREHIEAMLAAWEIVKNKYIPSIIRVMKTVGVKFTEEDADKFMKTLIILHDVGKCSEVYQKHLSNNEPLRGFRHELVSAYYAYNILKDMFKDETIAFIGALVVMMHHEPILMGQIRSLDKEELTPEVVLDKLRTFNGVMEGTESFIKSMIKEKLGVIPKVPSPTQEDVLREVIRLSVLARHRPDSGKLRMVVGALLIPLVLCDYKGAKEREGESPKFAEVLRVEMMK</sequence>
<proteinExistence type="evidence at protein level"/>
<comment type="function">
    <text evidence="3">CRISPR (clustered regularly interspaced short palindromic repeat), is an adaptive immune system that provides protection against mobile genetic elements (viruses, transposable elements and conjugative plasmids). CRISPR clusters contain sequences complementary to antecedent mobile elements and target invading nucleic acids. CRISPR clusters are transcribed and processed into CRISPR RNA (crRNA). Cas3 plus Cascade participate in CRISPR interference, the third stage of CRISPR immunity. Acts as a ssDNA and ssRNA nuclease, probably with both exo- and endonuclease activities. Activity is higher for DNA than RNA. Templates include 2',3'-cAMP and 2',3'-cGMP.</text>
</comment>
<comment type="cofactor">
    <cofactor evidence="3">
        <name>Mg(2+)</name>
        <dbReference type="ChEBI" id="CHEBI:18420"/>
    </cofactor>
    <text evidence="3">ssDNase activity requires Mg(2+), ssRNase activity does not require cations.</text>
</comment>
<comment type="activity regulation">
    <text evidence="3">Both ssDNase and ssRNase are inhibited by EDTA.</text>
</comment>
<comment type="biophysicochemical properties">
    <phDependence>
        <text evidence="3">Optimum pH is 7-8.</text>
    </phDependence>
</comment>
<comment type="subunit">
    <text evidence="3">Monomer.</text>
</comment>
<comment type="domain">
    <text>Proteins of this family have an N-terminal nuclease domain and a C-terminal helicase/ATPase domain. In some CRISPR/Cas systems the domains are swapped, in others they are encoded separately.</text>
</comment>
<comment type="similarity">
    <text evidence="4">Belongs to the CRISPR-associated nuclease Cas3-HD family.</text>
</comment>
<dbReference type="EC" id="3.1.-.-"/>
<dbReference type="EMBL" id="AE009950">
    <property type="protein sequence ID" value="AAL80763.1"/>
    <property type="molecule type" value="Genomic_DNA"/>
</dbReference>
<dbReference type="RefSeq" id="WP_011011759.1">
    <property type="nucleotide sequence ID" value="NZ_CP023154.1"/>
</dbReference>
<dbReference type="PDB" id="7R2K">
    <property type="method" value="EM"/>
    <property type="resolution" value="3.30 A"/>
    <property type="chains" value="Q=2-237"/>
</dbReference>
<dbReference type="PDB" id="7TR8">
    <property type="method" value="EM"/>
    <property type="resolution" value="3.60 A"/>
    <property type="chains" value="Q=2-217"/>
</dbReference>
<dbReference type="PDB" id="7TRA">
    <property type="method" value="EM"/>
    <property type="resolution" value="3.30 A"/>
    <property type="chains" value="Q=2-217"/>
</dbReference>
<dbReference type="PDBsum" id="7R2K"/>
<dbReference type="PDBsum" id="7TR8"/>
<dbReference type="PDBsum" id="7TRA"/>
<dbReference type="EMDB" id="EMD-14245"/>
<dbReference type="EMDB" id="EMD-26082"/>
<dbReference type="EMDB" id="EMD-26083"/>
<dbReference type="EMDB" id="EMD-26084"/>
<dbReference type="SMR" id="Q8U336"/>
<dbReference type="STRING" id="186497.PF0639"/>
<dbReference type="PaxDb" id="186497-PF0639"/>
<dbReference type="DNASU" id="1468483"/>
<dbReference type="KEGG" id="pfu:PF0639"/>
<dbReference type="PATRIC" id="fig|186497.12.peg.669"/>
<dbReference type="eggNOG" id="arCOG01442">
    <property type="taxonomic scope" value="Archaea"/>
</dbReference>
<dbReference type="HOGENOM" id="CLU_1052127_0_0_2"/>
<dbReference type="OrthoDB" id="99692at2157"/>
<dbReference type="PhylomeDB" id="Q8U336"/>
<dbReference type="Proteomes" id="UP000001013">
    <property type="component" value="Chromosome"/>
</dbReference>
<dbReference type="GO" id="GO:0004519">
    <property type="term" value="F:endonuclease activity"/>
    <property type="evidence" value="ECO:0007669"/>
    <property type="project" value="UniProtKB-KW"/>
</dbReference>
<dbReference type="GO" id="GO:0004527">
    <property type="term" value="F:exonuclease activity"/>
    <property type="evidence" value="ECO:0007669"/>
    <property type="project" value="UniProtKB-KW"/>
</dbReference>
<dbReference type="GO" id="GO:0046872">
    <property type="term" value="F:metal ion binding"/>
    <property type="evidence" value="ECO:0007669"/>
    <property type="project" value="UniProtKB-KW"/>
</dbReference>
<dbReference type="GO" id="GO:0051607">
    <property type="term" value="P:defense response to virus"/>
    <property type="evidence" value="ECO:0007669"/>
    <property type="project" value="UniProtKB-KW"/>
</dbReference>
<dbReference type="CDD" id="cd10013">
    <property type="entry name" value="Cas3''_I"/>
    <property type="match status" value="1"/>
</dbReference>
<dbReference type="Gene3D" id="1.10.3210.30">
    <property type="match status" value="1"/>
</dbReference>
<dbReference type="InterPro" id="IPR006483">
    <property type="entry name" value="CRISPR-assoc_Cas3_HD"/>
</dbReference>
<dbReference type="InterPro" id="IPR038257">
    <property type="entry name" value="CRISPR-assoc_Cas3_HD_sf"/>
</dbReference>
<dbReference type="NCBIfam" id="TIGR01596">
    <property type="entry name" value="cas3_HD"/>
    <property type="match status" value="1"/>
</dbReference>
<dbReference type="Pfam" id="PF18019">
    <property type="entry name" value="Cas3_HD"/>
    <property type="match status" value="1"/>
</dbReference>
<dbReference type="SUPFAM" id="SSF109604">
    <property type="entry name" value="HD-domain/PDEase-like"/>
    <property type="match status" value="1"/>
</dbReference>
<dbReference type="PROSITE" id="PS51643">
    <property type="entry name" value="HD_CAS3"/>
    <property type="match status" value="1"/>
</dbReference>
<keyword id="KW-0002">3D-structure</keyword>
<keyword id="KW-0051">Antiviral defense</keyword>
<keyword id="KW-0255">Endonuclease</keyword>
<keyword id="KW-0269">Exonuclease</keyword>
<keyword id="KW-0378">Hydrolase</keyword>
<keyword id="KW-0460">Magnesium</keyword>
<keyword id="KW-0479">Metal-binding</keyword>
<keyword id="KW-0540">Nuclease</keyword>
<keyword id="KW-1185">Reference proteome</keyword>